<protein>
    <recommendedName>
        <fullName evidence="1">Triosephosphate isomerase</fullName>
        <shortName evidence="1">TIM</shortName>
        <shortName evidence="1">TPI</shortName>
        <ecNumber evidence="1">5.3.1.1</ecNumber>
    </recommendedName>
    <alternativeName>
        <fullName evidence="1">Triose-phosphate isomerase</fullName>
    </alternativeName>
</protein>
<organism>
    <name type="scientific">Ruegeria sp. (strain TM1040)</name>
    <name type="common">Silicibacter sp.</name>
    <dbReference type="NCBI Taxonomy" id="292414"/>
    <lineage>
        <taxon>Bacteria</taxon>
        <taxon>Pseudomonadati</taxon>
        <taxon>Pseudomonadota</taxon>
        <taxon>Alphaproteobacteria</taxon>
        <taxon>Rhodobacterales</taxon>
        <taxon>Roseobacteraceae</taxon>
        <taxon>Ruegeria</taxon>
    </lineage>
</organism>
<proteinExistence type="inferred from homology"/>
<keyword id="KW-0963">Cytoplasm</keyword>
<keyword id="KW-0312">Gluconeogenesis</keyword>
<keyword id="KW-0324">Glycolysis</keyword>
<keyword id="KW-0413">Isomerase</keyword>
<keyword id="KW-1185">Reference proteome</keyword>
<comment type="function">
    <text evidence="1">Involved in the gluconeogenesis. Catalyzes stereospecifically the conversion of dihydroxyacetone phosphate (DHAP) to D-glyceraldehyde-3-phosphate (G3P).</text>
</comment>
<comment type="catalytic activity">
    <reaction evidence="1">
        <text>D-glyceraldehyde 3-phosphate = dihydroxyacetone phosphate</text>
        <dbReference type="Rhea" id="RHEA:18585"/>
        <dbReference type="ChEBI" id="CHEBI:57642"/>
        <dbReference type="ChEBI" id="CHEBI:59776"/>
        <dbReference type="EC" id="5.3.1.1"/>
    </reaction>
</comment>
<comment type="pathway">
    <text evidence="1">Carbohydrate biosynthesis; gluconeogenesis.</text>
</comment>
<comment type="pathway">
    <text evidence="1">Carbohydrate degradation; glycolysis; D-glyceraldehyde 3-phosphate from glycerone phosphate: step 1/1.</text>
</comment>
<comment type="subunit">
    <text evidence="1">Homodimer.</text>
</comment>
<comment type="subcellular location">
    <subcellularLocation>
        <location evidence="1">Cytoplasm</location>
    </subcellularLocation>
</comment>
<comment type="similarity">
    <text evidence="1">Belongs to the triosephosphate isomerase family.</text>
</comment>
<evidence type="ECO:0000255" key="1">
    <source>
        <dbReference type="HAMAP-Rule" id="MF_00147"/>
    </source>
</evidence>
<reference key="1">
    <citation type="submission" date="2006-05" db="EMBL/GenBank/DDBJ databases">
        <title>Complete sequence of chromosome of Silicibacter sp. TM1040.</title>
        <authorList>
            <consortium name="US DOE Joint Genome Institute"/>
            <person name="Copeland A."/>
            <person name="Lucas S."/>
            <person name="Lapidus A."/>
            <person name="Barry K."/>
            <person name="Detter J.C."/>
            <person name="Glavina del Rio T."/>
            <person name="Hammon N."/>
            <person name="Israni S."/>
            <person name="Dalin E."/>
            <person name="Tice H."/>
            <person name="Pitluck S."/>
            <person name="Brettin T."/>
            <person name="Bruce D."/>
            <person name="Han C."/>
            <person name="Tapia R."/>
            <person name="Goodwin L."/>
            <person name="Thompson L.S."/>
            <person name="Gilna P."/>
            <person name="Schmutz J."/>
            <person name="Larimer F."/>
            <person name="Land M."/>
            <person name="Hauser L."/>
            <person name="Kyrpides N."/>
            <person name="Kim E."/>
            <person name="Belas R."/>
            <person name="Moran M.A."/>
            <person name="Buchan A."/>
            <person name="Gonzalez J.M."/>
            <person name="Schell M.A."/>
            <person name="Sun F."/>
            <person name="Richardson P."/>
        </authorList>
    </citation>
    <scope>NUCLEOTIDE SEQUENCE [LARGE SCALE GENOMIC DNA]</scope>
    <source>
        <strain>TM1040</strain>
    </source>
</reference>
<name>TPIS_RUEST</name>
<gene>
    <name evidence="1" type="primary">tpiA</name>
    <name type="ordered locus">TM1040_0764</name>
</gene>
<dbReference type="EC" id="5.3.1.1" evidence="1"/>
<dbReference type="EMBL" id="CP000377">
    <property type="protein sequence ID" value="ABF63497.1"/>
    <property type="molecule type" value="Genomic_DNA"/>
</dbReference>
<dbReference type="RefSeq" id="WP_011538109.1">
    <property type="nucleotide sequence ID" value="NC_008044.1"/>
</dbReference>
<dbReference type="SMR" id="Q1GIL9"/>
<dbReference type="STRING" id="292414.TM1040_0764"/>
<dbReference type="KEGG" id="sit:TM1040_0764"/>
<dbReference type="eggNOG" id="COG0149">
    <property type="taxonomic scope" value="Bacteria"/>
</dbReference>
<dbReference type="HOGENOM" id="CLU_024251_2_1_5"/>
<dbReference type="OrthoDB" id="9809429at2"/>
<dbReference type="UniPathway" id="UPA00109">
    <property type="reaction ID" value="UER00189"/>
</dbReference>
<dbReference type="UniPathway" id="UPA00138"/>
<dbReference type="Proteomes" id="UP000000636">
    <property type="component" value="Chromosome"/>
</dbReference>
<dbReference type="GO" id="GO:0005829">
    <property type="term" value="C:cytosol"/>
    <property type="evidence" value="ECO:0007669"/>
    <property type="project" value="TreeGrafter"/>
</dbReference>
<dbReference type="GO" id="GO:0004807">
    <property type="term" value="F:triose-phosphate isomerase activity"/>
    <property type="evidence" value="ECO:0007669"/>
    <property type="project" value="UniProtKB-UniRule"/>
</dbReference>
<dbReference type="GO" id="GO:0006094">
    <property type="term" value="P:gluconeogenesis"/>
    <property type="evidence" value="ECO:0007669"/>
    <property type="project" value="UniProtKB-UniRule"/>
</dbReference>
<dbReference type="GO" id="GO:0046166">
    <property type="term" value="P:glyceraldehyde-3-phosphate biosynthetic process"/>
    <property type="evidence" value="ECO:0007669"/>
    <property type="project" value="TreeGrafter"/>
</dbReference>
<dbReference type="GO" id="GO:0019563">
    <property type="term" value="P:glycerol catabolic process"/>
    <property type="evidence" value="ECO:0007669"/>
    <property type="project" value="TreeGrafter"/>
</dbReference>
<dbReference type="GO" id="GO:0006096">
    <property type="term" value="P:glycolytic process"/>
    <property type="evidence" value="ECO:0007669"/>
    <property type="project" value="UniProtKB-UniRule"/>
</dbReference>
<dbReference type="CDD" id="cd00311">
    <property type="entry name" value="TIM"/>
    <property type="match status" value="1"/>
</dbReference>
<dbReference type="FunFam" id="3.20.20.70:FF:000016">
    <property type="entry name" value="Triosephosphate isomerase"/>
    <property type="match status" value="1"/>
</dbReference>
<dbReference type="Gene3D" id="3.20.20.70">
    <property type="entry name" value="Aldolase class I"/>
    <property type="match status" value="1"/>
</dbReference>
<dbReference type="HAMAP" id="MF_00147_B">
    <property type="entry name" value="TIM_B"/>
    <property type="match status" value="1"/>
</dbReference>
<dbReference type="InterPro" id="IPR013785">
    <property type="entry name" value="Aldolase_TIM"/>
</dbReference>
<dbReference type="InterPro" id="IPR035990">
    <property type="entry name" value="TIM_sf"/>
</dbReference>
<dbReference type="InterPro" id="IPR022896">
    <property type="entry name" value="TrioseP_Isoase_bac/euk"/>
</dbReference>
<dbReference type="InterPro" id="IPR000652">
    <property type="entry name" value="Triosephosphate_isomerase"/>
</dbReference>
<dbReference type="InterPro" id="IPR020861">
    <property type="entry name" value="Triosephosphate_isomerase_AS"/>
</dbReference>
<dbReference type="NCBIfam" id="TIGR00419">
    <property type="entry name" value="tim"/>
    <property type="match status" value="1"/>
</dbReference>
<dbReference type="PANTHER" id="PTHR21139">
    <property type="entry name" value="TRIOSEPHOSPHATE ISOMERASE"/>
    <property type="match status" value="1"/>
</dbReference>
<dbReference type="PANTHER" id="PTHR21139:SF42">
    <property type="entry name" value="TRIOSEPHOSPHATE ISOMERASE"/>
    <property type="match status" value="1"/>
</dbReference>
<dbReference type="Pfam" id="PF00121">
    <property type="entry name" value="TIM"/>
    <property type="match status" value="1"/>
</dbReference>
<dbReference type="SUPFAM" id="SSF51351">
    <property type="entry name" value="Triosephosphate isomerase (TIM)"/>
    <property type="match status" value="1"/>
</dbReference>
<dbReference type="PROSITE" id="PS00171">
    <property type="entry name" value="TIM_1"/>
    <property type="match status" value="1"/>
</dbReference>
<dbReference type="PROSITE" id="PS51440">
    <property type="entry name" value="TIM_2"/>
    <property type="match status" value="1"/>
</dbReference>
<accession>Q1GIL9</accession>
<feature type="chain" id="PRO_1000058120" description="Triosephosphate isomerase">
    <location>
        <begin position="1"/>
        <end position="246"/>
    </location>
</feature>
<feature type="active site" description="Electrophile" evidence="1">
    <location>
        <position position="91"/>
    </location>
</feature>
<feature type="active site" description="Proton acceptor" evidence="1">
    <location>
        <position position="161"/>
    </location>
</feature>
<feature type="binding site" evidence="1">
    <location>
        <begin position="9"/>
        <end position="11"/>
    </location>
    <ligand>
        <name>substrate</name>
    </ligand>
</feature>
<feature type="binding site" evidence="1">
    <location>
        <position position="167"/>
    </location>
    <ligand>
        <name>substrate</name>
    </ligand>
</feature>
<feature type="binding site" evidence="1">
    <location>
        <position position="206"/>
    </location>
    <ligand>
        <name>substrate</name>
    </ligand>
</feature>
<feature type="binding site" evidence="1">
    <location>
        <begin position="227"/>
        <end position="228"/>
    </location>
    <ligand>
        <name>substrate</name>
    </ligand>
</feature>
<sequence>MARKLAAGNWKMNGTGEHLAELENLAQGDLPEGVDVLICPPATLISRAADRAGDIAIGGQDCHAKTSGAHTGDLSADMLRDAGATYVIIGHSERRADHGEGDADVRAKTEAAQAAGLVAVVCIGETLEEREAGTTLEVVGAQLAGSLPDGVTAENTVVAYEPVWAIGTGKVPTLDQIAEVHDALRADLVARFGAAGKDLPLLYGGSVKPGNAAEIFGVSNVDGALVGGASLKAADFGPIIAALAAS</sequence>